<reference key="1">
    <citation type="journal article" date="1988" name="Protein Seq. Data Anal.">
        <title>The nucleotide sequence of rabbit liver cytochrome b5 mRNA.</title>
        <authorList>
            <person name="Dariush N."/>
            <person name="Fisher C.W."/>
            <person name="Steggles A.W."/>
        </authorList>
    </citation>
    <scope>NUCLEOTIDE SEQUENCE [MRNA] (ISOFORM 1)</scope>
</reference>
<reference key="2">
    <citation type="journal article" date="1992" name="Biochem. Biophys. Res. Commun.">
        <title>Molecular cloning of rabbit cytochrome b5 genes: evidence for the occurrence of two separate genes encoding the soluble and microsomal forms.</title>
        <authorList>
            <person name="Takamatsu H."/>
            <person name="Kozutsumi Y."/>
            <person name="Suzuki A."/>
            <person name="Kawasaki T."/>
        </authorList>
    </citation>
    <scope>NUCLEOTIDE SEQUENCE [MRNA] (ISOFORM 2)</scope>
    <source>
        <strain>New Zealand white</strain>
    </source>
</reference>
<reference key="3">
    <citation type="journal article" date="1968" name="J. Biochem.">
        <title>Primary structure of rabbit liver cytochrome b5.</title>
        <authorList>
            <person name="Tsugita A."/>
            <person name="Kobayashi M."/>
            <person name="Kajihara T."/>
            <person name="Hagihara B."/>
        </authorList>
    </citation>
    <scope>PROTEIN SEQUENCE OF 9-46 AND 50-91</scope>
</reference>
<reference key="4">
    <citation type="journal article" date="1970" name="Proc. Natl. Acad. Sci. U.S.A.">
        <title>Comparative study of the primary structures of cytochrome b5 from four species.</title>
        <authorList>
            <person name="Tsugita A."/>
            <person name="Kobayashi M."/>
            <person name="Tani S."/>
            <person name="Kyo S."/>
            <person name="Rashid M.A."/>
            <person name="Yoshida Y."/>
            <person name="Kajihara T."/>
            <person name="Hagihara B."/>
        </authorList>
    </citation>
    <scope>PROTEIN SEQUENCE OF 7-8 AND 47-49</scope>
</reference>
<reference key="5">
    <citation type="journal article" date="1970" name="J. Biol. Chem.">
        <title>Amino acid sequence of rabbit liver microsomal cytochrome b5.</title>
        <authorList>
            <person name="Ozols J."/>
        </authorList>
    </citation>
    <scope>PROTEIN SEQUENCE OF 5-98</scope>
</reference>
<reference key="6">
    <citation type="journal article" date="1979" name="J. Biochem.">
        <title>Primary structure of the membrane-binding segment of rabbit cytochrome b5.</title>
        <authorList>
            <person name="Kondo K."/>
            <person name="Tajima S."/>
            <person name="Sato R."/>
            <person name="Narita K."/>
        </authorList>
    </citation>
    <scope>PROTEIN SEQUENCE OF 92-134</scope>
</reference>
<reference key="7">
    <citation type="journal article" date="1980" name="J. Biol. Chem.">
        <title>Amino acid sequence of the membranous segment of rabbit liver cytochrome b5. Methodology for separation of hydrophobic peptides.</title>
        <authorList>
            <person name="Takagaki Y."/>
            <person name="Gerber G.E."/>
            <person name="Nihei K."/>
            <person name="Khorana H.G."/>
        </authorList>
    </citation>
    <scope>PROTEIN SEQUENCE OF 99-134</scope>
</reference>
<reference key="8">
    <citation type="journal article" date="1989" name="Biochim. Biophys. Acta">
        <title>Structure of cytochrome b5 and its topology in the microsomal membrane.</title>
        <authorList>
            <person name="Ozols J."/>
        </authorList>
    </citation>
    <scope>PROTEIN SEQUENCE OF 2-11</scope>
    <scope>ACETYLATION AT ALA-2</scope>
</reference>
<reference key="9">
    <citation type="journal article" date="2000" name="Eur. J. Biochem.">
        <title>Solution structure of oxidized microsomal rabbit cytochrome b5 factors determining the heterogeneous binding of the heme.</title>
        <authorList>
            <person name="Banci L."/>
            <person name="Bertini I."/>
            <person name="Rosato A."/>
            <person name="Scacchieri S."/>
        </authorList>
    </citation>
    <scope>STRUCTURE BY NMR OF 7-100</scope>
</reference>
<proteinExistence type="evidence at protein level"/>
<feature type="initiator methionine" description="Removed" evidence="4">
    <location>
        <position position="1"/>
    </location>
</feature>
<feature type="chain" id="PRO_0000166013" description="Cytochrome b5">
    <location>
        <begin position="2"/>
        <end position="134"/>
    </location>
</feature>
<feature type="transmembrane region" description="Helical" evidence="2">
    <location>
        <begin position="109"/>
        <end position="131"/>
    </location>
</feature>
<feature type="domain" description="Cytochrome b5 heme-binding" evidence="3">
    <location>
        <begin position="9"/>
        <end position="85"/>
    </location>
</feature>
<feature type="binding site" description="axial binding residue">
    <location>
        <position position="44"/>
    </location>
    <ligand>
        <name>heme</name>
        <dbReference type="ChEBI" id="CHEBI:30413"/>
    </ligand>
    <ligandPart>
        <name>Fe</name>
        <dbReference type="ChEBI" id="CHEBI:18248"/>
    </ligandPart>
</feature>
<feature type="binding site" description="axial binding residue">
    <location>
        <position position="68"/>
    </location>
    <ligand>
        <name>heme</name>
        <dbReference type="ChEBI" id="CHEBI:30413"/>
    </ligand>
    <ligandPart>
        <name>Fe</name>
        <dbReference type="ChEBI" id="CHEBI:18248"/>
    </ligandPart>
</feature>
<feature type="modified residue" description="N-acetylalanine" evidence="4">
    <location>
        <position position="2"/>
    </location>
</feature>
<feature type="modified residue" description="N6-acetyllysine" evidence="1">
    <location>
        <position position="7"/>
    </location>
</feature>
<feature type="modified residue" description="N6-acetyllysine" evidence="1">
    <location>
        <position position="10"/>
    </location>
</feature>
<feature type="modified residue" description="N6-acetyllysine" evidence="1">
    <location>
        <position position="19"/>
    </location>
</feature>
<feature type="splice variant" id="VSP_001244" description="In isoform 2." evidence="5">
    <original>T</original>
    <variation>P</variation>
    <location>
        <position position="98"/>
    </location>
</feature>
<feature type="splice variant" id="VSP_001245" description="In isoform 2." evidence="5">
    <location>
        <begin position="99"/>
        <end position="134"/>
    </location>
</feature>
<feature type="sequence conflict" description="In Ref. 3; AA sequence and 5; AA sequence." evidence="6" ref="3 5">
    <original>N</original>
    <variation>D</variation>
    <location>
        <position position="62"/>
    </location>
</feature>
<feature type="sequence conflict" description="In Ref. 6; AA sequence." evidence="6" ref="6">
    <original>D</original>
    <variation>N</variation>
    <location>
        <position position="104"/>
    </location>
</feature>
<feature type="strand" evidence="8">
    <location>
        <begin position="10"/>
        <end position="12"/>
    </location>
</feature>
<feature type="helix" evidence="7">
    <location>
        <begin position="14"/>
        <end position="17"/>
    </location>
</feature>
<feature type="turn" evidence="8">
    <location>
        <begin position="18"/>
        <end position="20"/>
    </location>
</feature>
<feature type="strand" evidence="8">
    <location>
        <begin position="22"/>
        <end position="25"/>
    </location>
</feature>
<feature type="strand" evidence="7">
    <location>
        <begin position="27"/>
        <end position="36"/>
    </location>
</feature>
<feature type="helix" evidence="7">
    <location>
        <begin position="38"/>
        <end position="40"/>
    </location>
</feature>
<feature type="turn" evidence="7">
    <location>
        <begin position="41"/>
        <end position="43"/>
    </location>
</feature>
<feature type="strand" evidence="7">
    <location>
        <begin position="44"/>
        <end position="46"/>
    </location>
</feature>
<feature type="helix" evidence="7">
    <location>
        <begin position="49"/>
        <end position="53"/>
    </location>
</feature>
<feature type="turn" evidence="7">
    <location>
        <begin position="54"/>
        <end position="56"/>
    </location>
</feature>
<feature type="helix" evidence="7">
    <location>
        <begin position="60"/>
        <end position="66"/>
    </location>
</feature>
<feature type="helix" evidence="7">
    <location>
        <begin position="70"/>
        <end position="79"/>
    </location>
</feature>
<feature type="strand" evidence="7">
    <location>
        <begin position="80"/>
        <end position="84"/>
    </location>
</feature>
<feature type="helix" evidence="7">
    <location>
        <begin position="86"/>
        <end position="88"/>
    </location>
</feature>
<feature type="turn" evidence="7">
    <location>
        <begin position="89"/>
        <end position="91"/>
    </location>
</feature>
<evidence type="ECO:0000250" key="1">
    <source>
        <dbReference type="UniProtKB" id="P56395"/>
    </source>
</evidence>
<evidence type="ECO:0000255" key="2"/>
<evidence type="ECO:0000255" key="3">
    <source>
        <dbReference type="PROSITE-ProRule" id="PRU00279"/>
    </source>
</evidence>
<evidence type="ECO:0000269" key="4">
    <source>
    </source>
</evidence>
<evidence type="ECO:0000303" key="5">
    <source>
    </source>
</evidence>
<evidence type="ECO:0000305" key="6"/>
<evidence type="ECO:0007829" key="7">
    <source>
        <dbReference type="PDB" id="1DO9"/>
    </source>
</evidence>
<evidence type="ECO:0007829" key="8">
    <source>
        <dbReference type="PDB" id="2M33"/>
    </source>
</evidence>
<comment type="function">
    <text>Cytochrome b5 is a membrane-bound hemoprotein functioning as an electron carrier for several membrane-bound oxygenases.</text>
</comment>
<comment type="subcellular location">
    <subcellularLocation>
        <location>Endoplasmic reticulum membrane</location>
        <topology>Single-pass membrane protein</topology>
        <orientation>Cytoplasmic side</orientation>
    </subcellularLocation>
    <subcellularLocation>
        <location>Microsome membrane</location>
        <topology>Single-pass membrane protein</topology>
        <orientation>Cytoplasmic side</orientation>
    </subcellularLocation>
</comment>
<comment type="alternative products">
    <event type="alternative splicing"/>
    <isoform>
        <id>P00169-1</id>
        <name>1</name>
        <name>Liver</name>
        <name>Membrane-bound</name>
        <sequence type="displayed"/>
    </isoform>
    <isoform>
        <id>P00169-2</id>
        <name>2</name>
        <name>Erythrocyte</name>
        <name>Cytoplasmic</name>
        <sequence type="described" ref="VSP_001244 VSP_001245"/>
    </isoform>
</comment>
<comment type="similarity">
    <text evidence="6">Belongs to the cytochrome b5 family.</text>
</comment>
<dbReference type="EMBL" id="M24844">
    <property type="protein sequence ID" value="AAB03878.1"/>
    <property type="molecule type" value="mRNA"/>
</dbReference>
<dbReference type="EMBL" id="D10901">
    <property type="protein sequence ID" value="BAA01712.1"/>
    <property type="molecule type" value="mRNA"/>
</dbReference>
<dbReference type="PIR" id="JN0316">
    <property type="entry name" value="JN0316"/>
</dbReference>
<dbReference type="PIR" id="S03373">
    <property type="entry name" value="CBRB5"/>
</dbReference>
<dbReference type="RefSeq" id="NP_001164734.1">
    <molecule id="P00169-2"/>
    <property type="nucleotide sequence ID" value="NM_001171263.1"/>
</dbReference>
<dbReference type="RefSeq" id="NP_001164735.1">
    <molecule id="P00169-1"/>
    <property type="nucleotide sequence ID" value="NM_001171264.1"/>
</dbReference>
<dbReference type="RefSeq" id="XP_017199148.1">
    <property type="nucleotide sequence ID" value="XM_017343659.1"/>
</dbReference>
<dbReference type="PDB" id="1DO9">
    <property type="method" value="NMR"/>
    <property type="chains" value="A=6-99"/>
</dbReference>
<dbReference type="PDB" id="2M33">
    <property type="method" value="NMR"/>
    <property type="chains" value="A=1-134"/>
</dbReference>
<dbReference type="PDBsum" id="1DO9"/>
<dbReference type="PDBsum" id="2M33"/>
<dbReference type="BMRB" id="P00169"/>
<dbReference type="SMR" id="P00169"/>
<dbReference type="FunCoup" id="P00169">
    <property type="interactions" value="1726"/>
</dbReference>
<dbReference type="STRING" id="9986.ENSOCUP00000013951"/>
<dbReference type="iPTMnet" id="P00169"/>
<dbReference type="PaxDb" id="9986-ENSOCUP00000013951"/>
<dbReference type="Ensembl" id="ENSOCUT00000016229.4">
    <molecule id="P00169-1"/>
    <property type="protein sequence ID" value="ENSOCUP00000013951.2"/>
    <property type="gene ID" value="ENSOCUG00000016235.4"/>
</dbReference>
<dbReference type="Ensembl" id="ENSOCUT00000045010.1">
    <molecule id="P00169-2"/>
    <property type="protein sequence ID" value="ENSOCUP00000028877.1"/>
    <property type="gene ID" value="ENSOCUG00000016235.4"/>
</dbReference>
<dbReference type="GeneID" id="100328912"/>
<dbReference type="GeneID" id="100328915"/>
<dbReference type="KEGG" id="ocu:100328912"/>
<dbReference type="CTD" id="1528"/>
<dbReference type="eggNOG" id="KOG0537">
    <property type="taxonomic scope" value="Eukaryota"/>
</dbReference>
<dbReference type="GeneTree" id="ENSGT00940000156770"/>
<dbReference type="HOGENOM" id="CLU_102602_3_3_1"/>
<dbReference type="InParanoid" id="P00169"/>
<dbReference type="OMA" id="FMFEHKS"/>
<dbReference type="OrthoDB" id="260519at2759"/>
<dbReference type="TreeFam" id="TF314537"/>
<dbReference type="EvolutionaryTrace" id="P00169"/>
<dbReference type="Proteomes" id="UP000001811">
    <property type="component" value="Chromosome 9"/>
</dbReference>
<dbReference type="Bgee" id="ENSOCUG00000016235">
    <property type="expression patterns" value="Expressed in liver and 17 other cell types or tissues"/>
</dbReference>
<dbReference type="GO" id="GO:0005829">
    <property type="term" value="C:cytosol"/>
    <property type="evidence" value="ECO:0007669"/>
    <property type="project" value="Ensembl"/>
</dbReference>
<dbReference type="GO" id="GO:0005789">
    <property type="term" value="C:endoplasmic reticulum membrane"/>
    <property type="evidence" value="ECO:0007669"/>
    <property type="project" value="UniProtKB-SubCell"/>
</dbReference>
<dbReference type="GO" id="GO:0019899">
    <property type="term" value="F:enzyme binding"/>
    <property type="evidence" value="ECO:0007669"/>
    <property type="project" value="Ensembl"/>
</dbReference>
<dbReference type="GO" id="GO:0020037">
    <property type="term" value="F:heme binding"/>
    <property type="evidence" value="ECO:0007669"/>
    <property type="project" value="InterPro"/>
</dbReference>
<dbReference type="GO" id="GO:0046872">
    <property type="term" value="F:metal ion binding"/>
    <property type="evidence" value="ECO:0007669"/>
    <property type="project" value="UniProtKB-KW"/>
</dbReference>
<dbReference type="FunFam" id="3.10.120.10:FF:000002">
    <property type="entry name" value="Cytochrome b5 type B"/>
    <property type="match status" value="1"/>
</dbReference>
<dbReference type="Gene3D" id="3.10.120.10">
    <property type="entry name" value="Cytochrome b5-like heme/steroid binding domain"/>
    <property type="match status" value="1"/>
</dbReference>
<dbReference type="InterPro" id="IPR001199">
    <property type="entry name" value="Cyt_B5-like_heme/steroid-bd"/>
</dbReference>
<dbReference type="InterPro" id="IPR036400">
    <property type="entry name" value="Cyt_B5-like_heme/steroid_sf"/>
</dbReference>
<dbReference type="InterPro" id="IPR018506">
    <property type="entry name" value="Cyt_B5_heme-BS"/>
</dbReference>
<dbReference type="InterPro" id="IPR050668">
    <property type="entry name" value="Cytochrome_b5"/>
</dbReference>
<dbReference type="PANTHER" id="PTHR19359">
    <property type="entry name" value="CYTOCHROME B5"/>
    <property type="match status" value="1"/>
</dbReference>
<dbReference type="PANTHER" id="PTHR19359:SF150">
    <property type="entry name" value="CYTOCHROME B5"/>
    <property type="match status" value="1"/>
</dbReference>
<dbReference type="Pfam" id="PF00173">
    <property type="entry name" value="Cyt-b5"/>
    <property type="match status" value="1"/>
</dbReference>
<dbReference type="PRINTS" id="PR00363">
    <property type="entry name" value="CYTOCHROMEB5"/>
</dbReference>
<dbReference type="SMART" id="SM01117">
    <property type="entry name" value="Cyt-b5"/>
    <property type="match status" value="1"/>
</dbReference>
<dbReference type="SUPFAM" id="SSF55856">
    <property type="entry name" value="Cytochrome b5-like heme/steroid binding domain"/>
    <property type="match status" value="1"/>
</dbReference>
<dbReference type="PROSITE" id="PS00191">
    <property type="entry name" value="CYTOCHROME_B5_1"/>
    <property type="match status" value="1"/>
</dbReference>
<dbReference type="PROSITE" id="PS50255">
    <property type="entry name" value="CYTOCHROME_B5_2"/>
    <property type="match status" value="1"/>
</dbReference>
<protein>
    <recommendedName>
        <fullName>Cytochrome b5</fullName>
    </recommendedName>
</protein>
<accession>P00169</accession>
<accession>Q28726</accession>
<keyword id="KW-0002">3D-structure</keyword>
<keyword id="KW-0007">Acetylation</keyword>
<keyword id="KW-0025">Alternative splicing</keyword>
<keyword id="KW-0903">Direct protein sequencing</keyword>
<keyword id="KW-0249">Electron transport</keyword>
<keyword id="KW-0256">Endoplasmic reticulum</keyword>
<keyword id="KW-0349">Heme</keyword>
<keyword id="KW-0408">Iron</keyword>
<keyword id="KW-0472">Membrane</keyword>
<keyword id="KW-0479">Metal-binding</keyword>
<keyword id="KW-0492">Microsome</keyword>
<keyword id="KW-1185">Reference proteome</keyword>
<keyword id="KW-0812">Transmembrane</keyword>
<keyword id="KW-1133">Transmembrane helix</keyword>
<keyword id="KW-0813">Transport</keyword>
<name>CYB5_RABIT</name>
<sequence length="134" mass="15349">MAAQSDKDVKYYTLEEIKKHNHSKSTWLILHHKVYDLTKFLEEHPGGEEVLREQAGGDATENFEDVGHSTDARELSKTFIIGELHPDDRSKLSKPMETLITTVDSNSSWWTNWVIPAISALIVALMYRLYMADD</sequence>
<organism>
    <name type="scientific">Oryctolagus cuniculus</name>
    <name type="common">Rabbit</name>
    <dbReference type="NCBI Taxonomy" id="9986"/>
    <lineage>
        <taxon>Eukaryota</taxon>
        <taxon>Metazoa</taxon>
        <taxon>Chordata</taxon>
        <taxon>Craniata</taxon>
        <taxon>Vertebrata</taxon>
        <taxon>Euteleostomi</taxon>
        <taxon>Mammalia</taxon>
        <taxon>Eutheria</taxon>
        <taxon>Euarchontoglires</taxon>
        <taxon>Glires</taxon>
        <taxon>Lagomorpha</taxon>
        <taxon>Leporidae</taxon>
        <taxon>Oryctolagus</taxon>
    </lineage>
</organism>
<gene>
    <name type="primary">CYB5A</name>
    <name type="synonym">CYB5</name>
</gene>